<name>PROB_PARC0</name>
<dbReference type="EC" id="2.7.2.11" evidence="1"/>
<dbReference type="EMBL" id="CP000512">
    <property type="protein sequence ID" value="ABM34220.1"/>
    <property type="molecule type" value="Genomic_DNA"/>
</dbReference>
<dbReference type="RefSeq" id="WP_011796714.1">
    <property type="nucleotide sequence ID" value="NC_008752.1"/>
</dbReference>
<dbReference type="SMR" id="A1TTD2"/>
<dbReference type="STRING" id="397945.Aave_3672"/>
<dbReference type="GeneID" id="79791438"/>
<dbReference type="KEGG" id="aav:Aave_3672"/>
<dbReference type="eggNOG" id="COG0263">
    <property type="taxonomic scope" value="Bacteria"/>
</dbReference>
<dbReference type="HOGENOM" id="CLU_025400_2_0_4"/>
<dbReference type="OrthoDB" id="9804434at2"/>
<dbReference type="UniPathway" id="UPA00098">
    <property type="reaction ID" value="UER00359"/>
</dbReference>
<dbReference type="Proteomes" id="UP000002596">
    <property type="component" value="Chromosome"/>
</dbReference>
<dbReference type="GO" id="GO:0005829">
    <property type="term" value="C:cytosol"/>
    <property type="evidence" value="ECO:0007669"/>
    <property type="project" value="TreeGrafter"/>
</dbReference>
<dbReference type="GO" id="GO:0005524">
    <property type="term" value="F:ATP binding"/>
    <property type="evidence" value="ECO:0007669"/>
    <property type="project" value="UniProtKB-KW"/>
</dbReference>
<dbReference type="GO" id="GO:0004349">
    <property type="term" value="F:glutamate 5-kinase activity"/>
    <property type="evidence" value="ECO:0007669"/>
    <property type="project" value="UniProtKB-UniRule"/>
</dbReference>
<dbReference type="GO" id="GO:0003723">
    <property type="term" value="F:RNA binding"/>
    <property type="evidence" value="ECO:0007669"/>
    <property type="project" value="InterPro"/>
</dbReference>
<dbReference type="GO" id="GO:0055129">
    <property type="term" value="P:L-proline biosynthetic process"/>
    <property type="evidence" value="ECO:0007669"/>
    <property type="project" value="UniProtKB-UniRule"/>
</dbReference>
<dbReference type="CDD" id="cd04242">
    <property type="entry name" value="AAK_G5K_ProB"/>
    <property type="match status" value="1"/>
</dbReference>
<dbReference type="CDD" id="cd21157">
    <property type="entry name" value="PUA_G5K"/>
    <property type="match status" value="1"/>
</dbReference>
<dbReference type="FunFam" id="2.30.130.10:FF:000007">
    <property type="entry name" value="Glutamate 5-kinase"/>
    <property type="match status" value="1"/>
</dbReference>
<dbReference type="FunFam" id="3.40.1160.10:FF:000018">
    <property type="entry name" value="Glutamate 5-kinase"/>
    <property type="match status" value="1"/>
</dbReference>
<dbReference type="Gene3D" id="3.40.1160.10">
    <property type="entry name" value="Acetylglutamate kinase-like"/>
    <property type="match status" value="2"/>
</dbReference>
<dbReference type="Gene3D" id="2.30.130.10">
    <property type="entry name" value="PUA domain"/>
    <property type="match status" value="1"/>
</dbReference>
<dbReference type="HAMAP" id="MF_00456">
    <property type="entry name" value="ProB"/>
    <property type="match status" value="1"/>
</dbReference>
<dbReference type="InterPro" id="IPR036393">
    <property type="entry name" value="AceGlu_kinase-like_sf"/>
</dbReference>
<dbReference type="InterPro" id="IPR001048">
    <property type="entry name" value="Asp/Glu/Uridylate_kinase"/>
</dbReference>
<dbReference type="InterPro" id="IPR041739">
    <property type="entry name" value="G5K_ProB"/>
</dbReference>
<dbReference type="InterPro" id="IPR001057">
    <property type="entry name" value="Glu/AcGlu_kinase"/>
</dbReference>
<dbReference type="InterPro" id="IPR011529">
    <property type="entry name" value="Glu_5kinase"/>
</dbReference>
<dbReference type="InterPro" id="IPR005715">
    <property type="entry name" value="Glu_5kinase/COase_Synthase"/>
</dbReference>
<dbReference type="InterPro" id="IPR019797">
    <property type="entry name" value="Glutamate_5-kinase_CS"/>
</dbReference>
<dbReference type="InterPro" id="IPR002478">
    <property type="entry name" value="PUA"/>
</dbReference>
<dbReference type="InterPro" id="IPR015947">
    <property type="entry name" value="PUA-like_sf"/>
</dbReference>
<dbReference type="InterPro" id="IPR036974">
    <property type="entry name" value="PUA_sf"/>
</dbReference>
<dbReference type="NCBIfam" id="TIGR01027">
    <property type="entry name" value="proB"/>
    <property type="match status" value="1"/>
</dbReference>
<dbReference type="PANTHER" id="PTHR43654">
    <property type="entry name" value="GLUTAMATE 5-KINASE"/>
    <property type="match status" value="1"/>
</dbReference>
<dbReference type="PANTHER" id="PTHR43654:SF1">
    <property type="entry name" value="ISOPENTENYL PHOSPHATE KINASE"/>
    <property type="match status" value="1"/>
</dbReference>
<dbReference type="Pfam" id="PF00696">
    <property type="entry name" value="AA_kinase"/>
    <property type="match status" value="1"/>
</dbReference>
<dbReference type="Pfam" id="PF01472">
    <property type="entry name" value="PUA"/>
    <property type="match status" value="1"/>
</dbReference>
<dbReference type="PIRSF" id="PIRSF000729">
    <property type="entry name" value="GK"/>
    <property type="match status" value="1"/>
</dbReference>
<dbReference type="PRINTS" id="PR00474">
    <property type="entry name" value="GLU5KINASE"/>
</dbReference>
<dbReference type="SMART" id="SM00359">
    <property type="entry name" value="PUA"/>
    <property type="match status" value="1"/>
</dbReference>
<dbReference type="SUPFAM" id="SSF53633">
    <property type="entry name" value="Carbamate kinase-like"/>
    <property type="match status" value="1"/>
</dbReference>
<dbReference type="SUPFAM" id="SSF88697">
    <property type="entry name" value="PUA domain-like"/>
    <property type="match status" value="1"/>
</dbReference>
<dbReference type="PROSITE" id="PS00902">
    <property type="entry name" value="GLUTAMATE_5_KINASE"/>
    <property type="match status" value="1"/>
</dbReference>
<dbReference type="PROSITE" id="PS50890">
    <property type="entry name" value="PUA"/>
    <property type="match status" value="1"/>
</dbReference>
<keyword id="KW-0028">Amino-acid biosynthesis</keyword>
<keyword id="KW-0067">ATP-binding</keyword>
<keyword id="KW-0963">Cytoplasm</keyword>
<keyword id="KW-0418">Kinase</keyword>
<keyword id="KW-0547">Nucleotide-binding</keyword>
<keyword id="KW-0641">Proline biosynthesis</keyword>
<keyword id="KW-0808">Transferase</keyword>
<proteinExistence type="inferred from homology"/>
<comment type="function">
    <text evidence="1">Catalyzes the transfer of a phosphate group to glutamate to form L-glutamate 5-phosphate.</text>
</comment>
<comment type="catalytic activity">
    <reaction evidence="1">
        <text>L-glutamate + ATP = L-glutamyl 5-phosphate + ADP</text>
        <dbReference type="Rhea" id="RHEA:14877"/>
        <dbReference type="ChEBI" id="CHEBI:29985"/>
        <dbReference type="ChEBI" id="CHEBI:30616"/>
        <dbReference type="ChEBI" id="CHEBI:58274"/>
        <dbReference type="ChEBI" id="CHEBI:456216"/>
        <dbReference type="EC" id="2.7.2.11"/>
    </reaction>
</comment>
<comment type="pathway">
    <text evidence="1">Amino-acid biosynthesis; L-proline biosynthesis; L-glutamate 5-semialdehyde from L-glutamate: step 1/2.</text>
</comment>
<comment type="subcellular location">
    <subcellularLocation>
        <location evidence="1">Cytoplasm</location>
    </subcellularLocation>
</comment>
<comment type="similarity">
    <text evidence="1">Belongs to the glutamate 5-kinase family.</text>
</comment>
<evidence type="ECO:0000255" key="1">
    <source>
        <dbReference type="HAMAP-Rule" id="MF_00456"/>
    </source>
</evidence>
<organism>
    <name type="scientific">Paracidovorax citrulli (strain AAC00-1)</name>
    <name type="common">Acidovorax citrulli</name>
    <dbReference type="NCBI Taxonomy" id="397945"/>
    <lineage>
        <taxon>Bacteria</taxon>
        <taxon>Pseudomonadati</taxon>
        <taxon>Pseudomonadota</taxon>
        <taxon>Betaproteobacteria</taxon>
        <taxon>Burkholderiales</taxon>
        <taxon>Comamonadaceae</taxon>
        <taxon>Paracidovorax</taxon>
    </lineage>
</organism>
<sequence>MVSSILRDARRIVIKVGSSLVTNEGRGLDETAITEWSRQMAALVNGSGGPRREVIMVSSGAIAEGMKRLGWSARPSEIHELQAAAAVGQMGLAQMYETKLREQGLGSAQVLLTHADLADRERYLNARSTLLTLLRLGVVPVINENDTVVTDEIKFGDNDTLGALVANLVEADALVILTDQKGLYTADPRRDPHAQFVHEAAAGDPSLEAMAGGVGTSIGRGGMITKIIAARRAAGSGASTVIAWGREPDVLLRLTQGEAIGTLLVAQTAKKQARKQWMADHLQLRGAVTVDVGAAAKLRQEGKSLLPIGMVAVEGEFSRGDVIAVRDAAGAEIARGLANYASAEARLLCRRPSSEFERLLGYSAEPEMVHRDNLVLSGG</sequence>
<protein>
    <recommendedName>
        <fullName evidence="1">Glutamate 5-kinase</fullName>
        <ecNumber evidence="1">2.7.2.11</ecNumber>
    </recommendedName>
    <alternativeName>
        <fullName evidence="1">Gamma-glutamyl kinase</fullName>
        <shortName evidence="1">GK</shortName>
    </alternativeName>
</protein>
<reference key="1">
    <citation type="submission" date="2006-12" db="EMBL/GenBank/DDBJ databases">
        <title>Complete sequence of Acidovorax avenae subsp. citrulli AAC00-1.</title>
        <authorList>
            <person name="Copeland A."/>
            <person name="Lucas S."/>
            <person name="Lapidus A."/>
            <person name="Barry K."/>
            <person name="Detter J.C."/>
            <person name="Glavina del Rio T."/>
            <person name="Dalin E."/>
            <person name="Tice H."/>
            <person name="Pitluck S."/>
            <person name="Kiss H."/>
            <person name="Brettin T."/>
            <person name="Bruce D."/>
            <person name="Han C."/>
            <person name="Tapia R."/>
            <person name="Gilna P."/>
            <person name="Schmutz J."/>
            <person name="Larimer F."/>
            <person name="Land M."/>
            <person name="Hauser L."/>
            <person name="Kyrpides N."/>
            <person name="Kim E."/>
            <person name="Stahl D."/>
            <person name="Richardson P."/>
        </authorList>
    </citation>
    <scope>NUCLEOTIDE SEQUENCE [LARGE SCALE GENOMIC DNA]</scope>
    <source>
        <strain>AAC00-1</strain>
    </source>
</reference>
<feature type="chain" id="PRO_1000125201" description="Glutamate 5-kinase">
    <location>
        <begin position="1"/>
        <end position="379"/>
    </location>
</feature>
<feature type="domain" description="PUA" evidence="1">
    <location>
        <begin position="285"/>
        <end position="363"/>
    </location>
</feature>
<feature type="binding site" evidence="1">
    <location>
        <position position="15"/>
    </location>
    <ligand>
        <name>ATP</name>
        <dbReference type="ChEBI" id="CHEBI:30616"/>
    </ligand>
</feature>
<feature type="binding site" evidence="1">
    <location>
        <position position="59"/>
    </location>
    <ligand>
        <name>substrate</name>
    </ligand>
</feature>
<feature type="binding site" evidence="1">
    <location>
        <position position="146"/>
    </location>
    <ligand>
        <name>substrate</name>
    </ligand>
</feature>
<feature type="binding site" evidence="1">
    <location>
        <position position="158"/>
    </location>
    <ligand>
        <name>substrate</name>
    </ligand>
</feature>
<feature type="binding site" evidence="1">
    <location>
        <begin position="178"/>
        <end position="179"/>
    </location>
    <ligand>
        <name>ATP</name>
        <dbReference type="ChEBI" id="CHEBI:30616"/>
    </ligand>
</feature>
<accession>A1TTD2</accession>
<gene>
    <name evidence="1" type="primary">proB</name>
    <name type="ordered locus">Aave_3672</name>
</gene>